<gene>
    <name type="ORF">DDB_G0286635</name>
</gene>
<name>Y7062_DICDI</name>
<protein>
    <recommendedName>
        <fullName>Putative uncharacterized protein DDB_G0286635</fullName>
    </recommendedName>
</protein>
<organism>
    <name type="scientific">Dictyostelium discoideum</name>
    <name type="common">Social amoeba</name>
    <dbReference type="NCBI Taxonomy" id="44689"/>
    <lineage>
        <taxon>Eukaryota</taxon>
        <taxon>Amoebozoa</taxon>
        <taxon>Evosea</taxon>
        <taxon>Eumycetozoa</taxon>
        <taxon>Dictyostelia</taxon>
        <taxon>Dictyosteliales</taxon>
        <taxon>Dictyosteliaceae</taxon>
        <taxon>Dictyostelium</taxon>
    </lineage>
</organism>
<proteinExistence type="predicted"/>
<evidence type="ECO:0000255" key="1"/>
<evidence type="ECO:0000256" key="2">
    <source>
        <dbReference type="SAM" id="MobiDB-lite"/>
    </source>
</evidence>
<accession>Q54LH4</accession>
<keyword id="KW-0175">Coiled coil</keyword>
<keyword id="KW-1185">Reference proteome</keyword>
<sequence>MEKETPQQETKQSTNKESGFFDEIIKRTNQLLEKEKELHEKYNKEITSQQDQIDQLKKKINQLKY</sequence>
<dbReference type="EMBL" id="AAFI02000089">
    <property type="protein sequence ID" value="EAL64073.1"/>
    <property type="molecule type" value="Genomic_DNA"/>
</dbReference>
<dbReference type="RefSeq" id="XP_637587.1">
    <property type="nucleotide sequence ID" value="XM_632495.1"/>
</dbReference>
<dbReference type="SMR" id="Q54LH4"/>
<dbReference type="PaxDb" id="44689-DDB0187062"/>
<dbReference type="EnsemblProtists" id="EAL64073">
    <property type="protein sequence ID" value="EAL64073"/>
    <property type="gene ID" value="DDB_G0286635"/>
</dbReference>
<dbReference type="GeneID" id="8625727"/>
<dbReference type="KEGG" id="ddi:DDB_G0286635"/>
<dbReference type="dictyBase" id="DDB_G0286635"/>
<dbReference type="HOGENOM" id="CLU_2854362_0_0_1"/>
<dbReference type="InParanoid" id="Q54LH4"/>
<dbReference type="PRO" id="PR:Q54LH4"/>
<dbReference type="Proteomes" id="UP000002195">
    <property type="component" value="Chromosome 4"/>
</dbReference>
<reference key="1">
    <citation type="journal article" date="2005" name="Nature">
        <title>The genome of the social amoeba Dictyostelium discoideum.</title>
        <authorList>
            <person name="Eichinger L."/>
            <person name="Pachebat J.A."/>
            <person name="Gloeckner G."/>
            <person name="Rajandream M.A."/>
            <person name="Sucgang R."/>
            <person name="Berriman M."/>
            <person name="Song J."/>
            <person name="Olsen R."/>
            <person name="Szafranski K."/>
            <person name="Xu Q."/>
            <person name="Tunggal B."/>
            <person name="Kummerfeld S."/>
            <person name="Madera M."/>
            <person name="Konfortov B.A."/>
            <person name="Rivero F."/>
            <person name="Bankier A.T."/>
            <person name="Lehmann R."/>
            <person name="Hamlin N."/>
            <person name="Davies R."/>
            <person name="Gaudet P."/>
            <person name="Fey P."/>
            <person name="Pilcher K."/>
            <person name="Chen G."/>
            <person name="Saunders D."/>
            <person name="Sodergren E.J."/>
            <person name="Davis P."/>
            <person name="Kerhornou A."/>
            <person name="Nie X."/>
            <person name="Hall N."/>
            <person name="Anjard C."/>
            <person name="Hemphill L."/>
            <person name="Bason N."/>
            <person name="Farbrother P."/>
            <person name="Desany B."/>
            <person name="Just E."/>
            <person name="Morio T."/>
            <person name="Rost R."/>
            <person name="Churcher C.M."/>
            <person name="Cooper J."/>
            <person name="Haydock S."/>
            <person name="van Driessche N."/>
            <person name="Cronin A."/>
            <person name="Goodhead I."/>
            <person name="Muzny D.M."/>
            <person name="Mourier T."/>
            <person name="Pain A."/>
            <person name="Lu M."/>
            <person name="Harper D."/>
            <person name="Lindsay R."/>
            <person name="Hauser H."/>
            <person name="James K.D."/>
            <person name="Quiles M."/>
            <person name="Madan Babu M."/>
            <person name="Saito T."/>
            <person name="Buchrieser C."/>
            <person name="Wardroper A."/>
            <person name="Felder M."/>
            <person name="Thangavelu M."/>
            <person name="Johnson D."/>
            <person name="Knights A."/>
            <person name="Loulseged H."/>
            <person name="Mungall K.L."/>
            <person name="Oliver K."/>
            <person name="Price C."/>
            <person name="Quail M.A."/>
            <person name="Urushihara H."/>
            <person name="Hernandez J."/>
            <person name="Rabbinowitsch E."/>
            <person name="Steffen D."/>
            <person name="Sanders M."/>
            <person name="Ma J."/>
            <person name="Kohara Y."/>
            <person name="Sharp S."/>
            <person name="Simmonds M.N."/>
            <person name="Spiegler S."/>
            <person name="Tivey A."/>
            <person name="Sugano S."/>
            <person name="White B."/>
            <person name="Walker D."/>
            <person name="Woodward J.R."/>
            <person name="Winckler T."/>
            <person name="Tanaka Y."/>
            <person name="Shaulsky G."/>
            <person name="Schleicher M."/>
            <person name="Weinstock G.M."/>
            <person name="Rosenthal A."/>
            <person name="Cox E.C."/>
            <person name="Chisholm R.L."/>
            <person name="Gibbs R.A."/>
            <person name="Loomis W.F."/>
            <person name="Platzer M."/>
            <person name="Kay R.R."/>
            <person name="Williams J.G."/>
            <person name="Dear P.H."/>
            <person name="Noegel A.A."/>
            <person name="Barrell B.G."/>
            <person name="Kuspa A."/>
        </authorList>
    </citation>
    <scope>NUCLEOTIDE SEQUENCE [LARGE SCALE GENOMIC DNA]</scope>
    <source>
        <strain>AX4</strain>
    </source>
</reference>
<feature type="chain" id="PRO_0000348514" description="Putative uncharacterized protein DDB_G0286635">
    <location>
        <begin position="1"/>
        <end position="65"/>
    </location>
</feature>
<feature type="region of interest" description="Disordered" evidence="2">
    <location>
        <begin position="1"/>
        <end position="22"/>
    </location>
</feature>
<feature type="coiled-coil region" evidence="1">
    <location>
        <begin position="22"/>
        <end position="65"/>
    </location>
</feature>
<feature type="compositionally biased region" description="Polar residues" evidence="2">
    <location>
        <begin position="7"/>
        <end position="17"/>
    </location>
</feature>